<accession>A8ZRX7</accession>
<gene>
    <name evidence="1" type="primary">tgt</name>
    <name type="ordered locus">Dole_0084</name>
</gene>
<organism>
    <name type="scientific">Desulfosudis oleivorans (strain DSM 6200 / JCM 39069 / Hxd3)</name>
    <name type="common">Desulfococcus oleovorans</name>
    <dbReference type="NCBI Taxonomy" id="96561"/>
    <lineage>
        <taxon>Bacteria</taxon>
        <taxon>Pseudomonadati</taxon>
        <taxon>Thermodesulfobacteriota</taxon>
        <taxon>Desulfobacteria</taxon>
        <taxon>Desulfobacterales</taxon>
        <taxon>Desulfosudaceae</taxon>
        <taxon>Desulfosudis</taxon>
    </lineage>
</organism>
<dbReference type="EC" id="2.4.2.29" evidence="1"/>
<dbReference type="EMBL" id="CP000859">
    <property type="protein sequence ID" value="ABW65894.1"/>
    <property type="molecule type" value="Genomic_DNA"/>
</dbReference>
<dbReference type="RefSeq" id="WP_012173513.1">
    <property type="nucleotide sequence ID" value="NC_009943.1"/>
</dbReference>
<dbReference type="SMR" id="A8ZRX7"/>
<dbReference type="STRING" id="96561.Dole_0084"/>
<dbReference type="KEGG" id="dol:Dole_0084"/>
<dbReference type="eggNOG" id="COG0343">
    <property type="taxonomic scope" value="Bacteria"/>
</dbReference>
<dbReference type="HOGENOM" id="CLU_022060_0_1_7"/>
<dbReference type="OrthoDB" id="9805417at2"/>
<dbReference type="UniPathway" id="UPA00392"/>
<dbReference type="Proteomes" id="UP000008561">
    <property type="component" value="Chromosome"/>
</dbReference>
<dbReference type="GO" id="GO:0005829">
    <property type="term" value="C:cytosol"/>
    <property type="evidence" value="ECO:0007669"/>
    <property type="project" value="TreeGrafter"/>
</dbReference>
<dbReference type="GO" id="GO:0046872">
    <property type="term" value="F:metal ion binding"/>
    <property type="evidence" value="ECO:0007669"/>
    <property type="project" value="UniProtKB-KW"/>
</dbReference>
<dbReference type="GO" id="GO:0008479">
    <property type="term" value="F:tRNA-guanosine(34) queuine transglycosylase activity"/>
    <property type="evidence" value="ECO:0007669"/>
    <property type="project" value="UniProtKB-UniRule"/>
</dbReference>
<dbReference type="GO" id="GO:0008616">
    <property type="term" value="P:queuosine biosynthetic process"/>
    <property type="evidence" value="ECO:0007669"/>
    <property type="project" value="UniProtKB-UniRule"/>
</dbReference>
<dbReference type="GO" id="GO:0002099">
    <property type="term" value="P:tRNA wobble guanine modification"/>
    <property type="evidence" value="ECO:0007669"/>
    <property type="project" value="TreeGrafter"/>
</dbReference>
<dbReference type="GO" id="GO:0101030">
    <property type="term" value="P:tRNA-guanine transglycosylation"/>
    <property type="evidence" value="ECO:0007669"/>
    <property type="project" value="InterPro"/>
</dbReference>
<dbReference type="FunFam" id="3.20.20.105:FF:000001">
    <property type="entry name" value="Queuine tRNA-ribosyltransferase"/>
    <property type="match status" value="1"/>
</dbReference>
<dbReference type="Gene3D" id="3.20.20.105">
    <property type="entry name" value="Queuine tRNA-ribosyltransferase-like"/>
    <property type="match status" value="1"/>
</dbReference>
<dbReference type="HAMAP" id="MF_00168">
    <property type="entry name" value="Q_tRNA_Tgt"/>
    <property type="match status" value="1"/>
</dbReference>
<dbReference type="InterPro" id="IPR050076">
    <property type="entry name" value="ArchSynthase1/Queuine_TRR"/>
</dbReference>
<dbReference type="InterPro" id="IPR004803">
    <property type="entry name" value="TGT"/>
</dbReference>
<dbReference type="InterPro" id="IPR036511">
    <property type="entry name" value="TGT-like_sf"/>
</dbReference>
<dbReference type="InterPro" id="IPR002616">
    <property type="entry name" value="tRNA_ribo_trans-like"/>
</dbReference>
<dbReference type="NCBIfam" id="TIGR00430">
    <property type="entry name" value="Q_tRNA_tgt"/>
    <property type="match status" value="1"/>
</dbReference>
<dbReference type="NCBIfam" id="TIGR00449">
    <property type="entry name" value="tgt_general"/>
    <property type="match status" value="1"/>
</dbReference>
<dbReference type="PANTHER" id="PTHR46499">
    <property type="entry name" value="QUEUINE TRNA-RIBOSYLTRANSFERASE"/>
    <property type="match status" value="1"/>
</dbReference>
<dbReference type="PANTHER" id="PTHR46499:SF1">
    <property type="entry name" value="QUEUINE TRNA-RIBOSYLTRANSFERASE"/>
    <property type="match status" value="1"/>
</dbReference>
<dbReference type="Pfam" id="PF01702">
    <property type="entry name" value="TGT"/>
    <property type="match status" value="1"/>
</dbReference>
<dbReference type="SUPFAM" id="SSF51713">
    <property type="entry name" value="tRNA-guanine transglycosylase"/>
    <property type="match status" value="1"/>
</dbReference>
<proteinExistence type="inferred from homology"/>
<protein>
    <recommendedName>
        <fullName evidence="1">Queuine tRNA-ribosyltransferase</fullName>
        <ecNumber evidence="1">2.4.2.29</ecNumber>
    </recommendedName>
    <alternativeName>
        <fullName evidence="1">Guanine insertion enzyme</fullName>
    </alternativeName>
    <alternativeName>
        <fullName evidence="1">tRNA-guanine transglycosylase</fullName>
    </alternativeName>
</protein>
<comment type="function">
    <text evidence="1">Catalyzes the base-exchange of a guanine (G) residue with the queuine precursor 7-aminomethyl-7-deazaguanine (PreQ1) at position 34 (anticodon wobble position) in tRNAs with GU(N) anticodons (tRNA-Asp, -Asn, -His and -Tyr). Catalysis occurs through a double-displacement mechanism. The nucleophile active site attacks the C1' of nucleotide 34 to detach the guanine base from the RNA, forming a covalent enzyme-RNA intermediate. The proton acceptor active site deprotonates the incoming PreQ1, allowing a nucleophilic attack on the C1' of the ribose to form the product. After dissociation, two additional enzymatic reactions on the tRNA convert PreQ1 to queuine (Q), resulting in the hypermodified nucleoside queuosine (7-(((4,5-cis-dihydroxy-2-cyclopenten-1-yl)amino)methyl)-7-deazaguanosine).</text>
</comment>
<comment type="catalytic activity">
    <reaction evidence="1">
        <text>7-aminomethyl-7-carbaguanine + guanosine(34) in tRNA = 7-aminomethyl-7-carbaguanosine(34) in tRNA + guanine</text>
        <dbReference type="Rhea" id="RHEA:24104"/>
        <dbReference type="Rhea" id="RHEA-COMP:10341"/>
        <dbReference type="Rhea" id="RHEA-COMP:10342"/>
        <dbReference type="ChEBI" id="CHEBI:16235"/>
        <dbReference type="ChEBI" id="CHEBI:58703"/>
        <dbReference type="ChEBI" id="CHEBI:74269"/>
        <dbReference type="ChEBI" id="CHEBI:82833"/>
        <dbReference type="EC" id="2.4.2.29"/>
    </reaction>
</comment>
<comment type="cofactor">
    <cofactor evidence="1">
        <name>Zn(2+)</name>
        <dbReference type="ChEBI" id="CHEBI:29105"/>
    </cofactor>
    <text evidence="1">Binds 1 zinc ion per subunit.</text>
</comment>
<comment type="pathway">
    <text evidence="1">tRNA modification; tRNA-queuosine biosynthesis.</text>
</comment>
<comment type="subunit">
    <text evidence="1">Homodimer. Within each dimer, one monomer is responsible for RNA recognition and catalysis, while the other monomer binds to the replacement base PreQ1.</text>
</comment>
<comment type="similarity">
    <text evidence="1">Belongs to the queuine tRNA-ribosyltransferase family.</text>
</comment>
<name>TGT_DESOH</name>
<sequence>MFQFETTTACPDTKARTGKMTTAHGDVATPVFMPVGTLATVKSLSPEDLVACGAQIILGNTYHLYLRPGCDIIDAFSGVHAFMGWNRPLLTDSGGFQVFSLAKLSRITEEGAAFQSHLDGSSHLLTPESVIDIQNRLGSDIQMCLDQCIAFPAEKGAARDAANLTTRWAGRCRNRWQETGGPSRCGLFGIVQGGMFDDLRADSAGRLVDLDFSGYAVGGLSVGEPIETRLAVAEHTLSLLPPDRPRYIMGVGTPAELVELVALGADMFDCVMPTRNARNGKLFTSFGAINIRNACHAKETGPVDPACTCYTCTRFSRAYLRHLFMSRELLAYRLATLHNLFYYINLINDARAAVAAGRFAAFRKAFYAAQQATGPTGKEPCAGS</sequence>
<evidence type="ECO:0000255" key="1">
    <source>
        <dbReference type="HAMAP-Rule" id="MF_00168"/>
    </source>
</evidence>
<feature type="chain" id="PRO_1000197996" description="Queuine tRNA-ribosyltransferase">
    <location>
        <begin position="1"/>
        <end position="384"/>
    </location>
</feature>
<feature type="region of interest" description="RNA binding" evidence="1">
    <location>
        <begin position="250"/>
        <end position="256"/>
    </location>
</feature>
<feature type="region of interest" description="RNA binding; important for wobble base 34 recognition" evidence="1">
    <location>
        <begin position="274"/>
        <end position="278"/>
    </location>
</feature>
<feature type="active site" description="Proton acceptor" evidence="1">
    <location>
        <position position="92"/>
    </location>
</feature>
<feature type="active site" description="Nucleophile" evidence="1">
    <location>
        <position position="269"/>
    </location>
</feature>
<feature type="binding site" evidence="1">
    <location>
        <begin position="92"/>
        <end position="96"/>
    </location>
    <ligand>
        <name>substrate</name>
    </ligand>
</feature>
<feature type="binding site" evidence="1">
    <location>
        <position position="146"/>
    </location>
    <ligand>
        <name>substrate</name>
    </ligand>
</feature>
<feature type="binding site" evidence="1">
    <location>
        <position position="192"/>
    </location>
    <ligand>
        <name>substrate</name>
    </ligand>
</feature>
<feature type="binding site" evidence="1">
    <location>
        <position position="219"/>
    </location>
    <ligand>
        <name>substrate</name>
    </ligand>
</feature>
<feature type="binding site" evidence="1">
    <location>
        <position position="307"/>
    </location>
    <ligand>
        <name>Zn(2+)</name>
        <dbReference type="ChEBI" id="CHEBI:29105"/>
    </ligand>
</feature>
<feature type="binding site" evidence="1">
    <location>
        <position position="309"/>
    </location>
    <ligand>
        <name>Zn(2+)</name>
        <dbReference type="ChEBI" id="CHEBI:29105"/>
    </ligand>
</feature>
<feature type="binding site" evidence="1">
    <location>
        <position position="312"/>
    </location>
    <ligand>
        <name>Zn(2+)</name>
        <dbReference type="ChEBI" id="CHEBI:29105"/>
    </ligand>
</feature>
<feature type="binding site" evidence="1">
    <location>
        <position position="338"/>
    </location>
    <ligand>
        <name>Zn(2+)</name>
        <dbReference type="ChEBI" id="CHEBI:29105"/>
    </ligand>
</feature>
<keyword id="KW-0328">Glycosyltransferase</keyword>
<keyword id="KW-0479">Metal-binding</keyword>
<keyword id="KW-0671">Queuosine biosynthesis</keyword>
<keyword id="KW-1185">Reference proteome</keyword>
<keyword id="KW-0808">Transferase</keyword>
<keyword id="KW-0819">tRNA processing</keyword>
<keyword id="KW-0862">Zinc</keyword>
<reference key="1">
    <citation type="submission" date="2007-10" db="EMBL/GenBank/DDBJ databases">
        <title>Complete sequence of Desulfococcus oleovorans Hxd3.</title>
        <authorList>
            <consortium name="US DOE Joint Genome Institute"/>
            <person name="Copeland A."/>
            <person name="Lucas S."/>
            <person name="Lapidus A."/>
            <person name="Barry K."/>
            <person name="Glavina del Rio T."/>
            <person name="Dalin E."/>
            <person name="Tice H."/>
            <person name="Pitluck S."/>
            <person name="Kiss H."/>
            <person name="Brettin T."/>
            <person name="Bruce D."/>
            <person name="Detter J.C."/>
            <person name="Han C."/>
            <person name="Schmutz J."/>
            <person name="Larimer F."/>
            <person name="Land M."/>
            <person name="Hauser L."/>
            <person name="Kyrpides N."/>
            <person name="Kim E."/>
            <person name="Wawrik B."/>
            <person name="Richardson P."/>
        </authorList>
    </citation>
    <scope>NUCLEOTIDE SEQUENCE [LARGE SCALE GENOMIC DNA]</scope>
    <source>
        <strain>DSM 6200 / JCM 39069 / Hxd3</strain>
    </source>
</reference>